<gene>
    <name evidence="1" type="primary">purR</name>
    <name type="ordered locus">ECIAI39_1398</name>
</gene>
<evidence type="ECO:0000255" key="1">
    <source>
        <dbReference type="HAMAP-Rule" id="MF_01277"/>
    </source>
</evidence>
<comment type="function">
    <text evidence="1">Is the main repressor of the genes involved in the de novo synthesis of purine nucleotides, regulating purB, purC, purEK, purF, purHD, purL, purMN and guaBA expression. PurR is allosterically activated to bind its cognate DNA by binding the purine corepressors, hypoxanthine or guanine, thereby effecting transcription repression.</text>
</comment>
<comment type="pathway">
    <text>Purine metabolism; purine nucleotide biosynthesis [regulation].</text>
</comment>
<comment type="subunit">
    <text evidence="1">Homodimer.</text>
</comment>
<comment type="domain">
    <text evidence="1">Consists of two structural and functional domains: an N-terminal DNA-binding domain, approximately the first 60 residues, and a larger C-terminal domain, approximately 280 residues, which imparts the function of corepressor binding and oligomerization.</text>
</comment>
<accession>B7NTX5</accession>
<feature type="chain" id="PRO_1000140288" description="HTH-type transcriptional repressor PurR">
    <location>
        <begin position="1"/>
        <end position="341"/>
    </location>
</feature>
<feature type="domain" description="HTH lacI-type" evidence="1">
    <location>
        <begin position="2"/>
        <end position="56"/>
    </location>
</feature>
<feature type="DNA-binding region" description="H-T-H motif" evidence="1">
    <location>
        <begin position="4"/>
        <end position="23"/>
    </location>
</feature>
<feature type="DNA-binding region" evidence="1">
    <location>
        <begin position="48"/>
        <end position="56"/>
    </location>
</feature>
<feature type="binding site" evidence="1">
    <location>
        <position position="73"/>
    </location>
    <ligand>
        <name>hypoxanthine</name>
        <dbReference type="ChEBI" id="CHEBI:17368"/>
    </ligand>
</feature>
<feature type="binding site" evidence="1">
    <location>
        <position position="190"/>
    </location>
    <ligand>
        <name>hypoxanthine</name>
        <dbReference type="ChEBI" id="CHEBI:17368"/>
    </ligand>
</feature>
<feature type="binding site" evidence="1">
    <location>
        <position position="192"/>
    </location>
    <ligand>
        <name>hypoxanthine</name>
        <dbReference type="ChEBI" id="CHEBI:17368"/>
    </ligand>
</feature>
<feature type="binding site" evidence="1">
    <location>
        <position position="221"/>
    </location>
    <ligand>
        <name>hypoxanthine</name>
        <dbReference type="ChEBI" id="CHEBI:17368"/>
    </ligand>
</feature>
<feature type="binding site" evidence="1">
    <location>
        <position position="275"/>
    </location>
    <ligand>
        <name>hypoxanthine</name>
        <dbReference type="ChEBI" id="CHEBI:17368"/>
    </ligand>
</feature>
<proteinExistence type="inferred from homology"/>
<dbReference type="EMBL" id="CU928164">
    <property type="protein sequence ID" value="CAR17531.1"/>
    <property type="molecule type" value="Genomic_DNA"/>
</dbReference>
<dbReference type="RefSeq" id="WP_000190982.1">
    <property type="nucleotide sequence ID" value="NC_011750.1"/>
</dbReference>
<dbReference type="RefSeq" id="YP_002407403.1">
    <property type="nucleotide sequence ID" value="NC_011750.1"/>
</dbReference>
<dbReference type="SMR" id="B7NTX5"/>
<dbReference type="STRING" id="585057.ECIAI39_1398"/>
<dbReference type="GeneID" id="75204504"/>
<dbReference type="KEGG" id="ect:ECIAI39_1398"/>
<dbReference type="PATRIC" id="fig|585057.6.peg.1461"/>
<dbReference type="HOGENOM" id="CLU_037628_6_2_6"/>
<dbReference type="UniPathway" id="UPA00488"/>
<dbReference type="Proteomes" id="UP000000749">
    <property type="component" value="Chromosome"/>
</dbReference>
<dbReference type="GO" id="GO:0003700">
    <property type="term" value="F:DNA-binding transcription factor activity"/>
    <property type="evidence" value="ECO:0007669"/>
    <property type="project" value="TreeGrafter"/>
</dbReference>
<dbReference type="GO" id="GO:0000976">
    <property type="term" value="F:transcription cis-regulatory region binding"/>
    <property type="evidence" value="ECO:0007669"/>
    <property type="project" value="TreeGrafter"/>
</dbReference>
<dbReference type="GO" id="GO:0045892">
    <property type="term" value="P:negative regulation of DNA-templated transcription"/>
    <property type="evidence" value="ECO:0007669"/>
    <property type="project" value="UniProtKB-UniRule"/>
</dbReference>
<dbReference type="GO" id="GO:0006164">
    <property type="term" value="P:purine nucleotide biosynthetic process"/>
    <property type="evidence" value="ECO:0007669"/>
    <property type="project" value="UniProtKB-UniPathway"/>
</dbReference>
<dbReference type="CDD" id="cd01392">
    <property type="entry name" value="HTH_LacI"/>
    <property type="match status" value="1"/>
</dbReference>
<dbReference type="CDD" id="cd06275">
    <property type="entry name" value="PBP1_PurR"/>
    <property type="match status" value="1"/>
</dbReference>
<dbReference type="FunFam" id="1.10.260.40:FF:000002">
    <property type="entry name" value="HTH-type transcriptional repressor PurR"/>
    <property type="match status" value="1"/>
</dbReference>
<dbReference type="FunFam" id="3.40.50.2300:FF:000045">
    <property type="entry name" value="HTH-type transcriptional repressor PurR"/>
    <property type="match status" value="1"/>
</dbReference>
<dbReference type="Gene3D" id="3.40.50.2300">
    <property type="match status" value="2"/>
</dbReference>
<dbReference type="Gene3D" id="1.10.260.40">
    <property type="entry name" value="lambda repressor-like DNA-binding domains"/>
    <property type="match status" value="1"/>
</dbReference>
<dbReference type="HAMAP" id="MF_01277">
    <property type="entry name" value="HTH_type_PurR"/>
    <property type="match status" value="1"/>
</dbReference>
<dbReference type="InterPro" id="IPR000843">
    <property type="entry name" value="HTH_LacI"/>
</dbReference>
<dbReference type="InterPro" id="IPR046335">
    <property type="entry name" value="LacI/GalR-like_sensor"/>
</dbReference>
<dbReference type="InterPro" id="IPR010982">
    <property type="entry name" value="Lambda_DNA-bd_dom_sf"/>
</dbReference>
<dbReference type="InterPro" id="IPR028082">
    <property type="entry name" value="Peripla_BP_I"/>
</dbReference>
<dbReference type="InterPro" id="IPR023588">
    <property type="entry name" value="Tscrpt_reg_HTH_PurR"/>
</dbReference>
<dbReference type="NCBIfam" id="NF007979">
    <property type="entry name" value="PRK10703.1"/>
    <property type="match status" value="1"/>
</dbReference>
<dbReference type="PANTHER" id="PTHR30146:SF148">
    <property type="entry name" value="HTH-TYPE TRANSCRIPTIONAL REPRESSOR PURR-RELATED"/>
    <property type="match status" value="1"/>
</dbReference>
<dbReference type="PANTHER" id="PTHR30146">
    <property type="entry name" value="LACI-RELATED TRANSCRIPTIONAL REPRESSOR"/>
    <property type="match status" value="1"/>
</dbReference>
<dbReference type="Pfam" id="PF00356">
    <property type="entry name" value="LacI"/>
    <property type="match status" value="1"/>
</dbReference>
<dbReference type="Pfam" id="PF13377">
    <property type="entry name" value="Peripla_BP_3"/>
    <property type="match status" value="1"/>
</dbReference>
<dbReference type="PRINTS" id="PR00036">
    <property type="entry name" value="HTHLACI"/>
</dbReference>
<dbReference type="SMART" id="SM00354">
    <property type="entry name" value="HTH_LACI"/>
    <property type="match status" value="1"/>
</dbReference>
<dbReference type="SUPFAM" id="SSF47413">
    <property type="entry name" value="lambda repressor-like DNA-binding domains"/>
    <property type="match status" value="1"/>
</dbReference>
<dbReference type="SUPFAM" id="SSF53822">
    <property type="entry name" value="Periplasmic binding protein-like I"/>
    <property type="match status" value="1"/>
</dbReference>
<dbReference type="PROSITE" id="PS00356">
    <property type="entry name" value="HTH_LACI_1"/>
    <property type="match status" value="1"/>
</dbReference>
<dbReference type="PROSITE" id="PS50932">
    <property type="entry name" value="HTH_LACI_2"/>
    <property type="match status" value="1"/>
</dbReference>
<sequence>MATIKDVAKRANVSTTTVSHVINKTRFVAEETRNAVWAAIKELHYSPSAVARSLKVNHTKSIGLLATSSEAAYFAEIIEAVEKNCFQKGYTLILGNAWNNLEKQRAYLSMMAQKRVDGLLVMCSEYPEPLLAMLEEYRHIPMVVMDWGEAKADFTDAVIDNAFEGGYMAGRYLIERGHREIGVIPGPLERNTGAGRLAGFMKAMEEAMIKVPESWIVQGDFEPESGYRAMQQILSQPHRPTAVFCGGDIMAMGALCAADEMGLRVPQDVSLIGYDNVRNARYFTPALTTIHQPKDSLGETAFNMLLDRIVNKREEPQSIEVHPRLIERRSVADGPFRDYRR</sequence>
<reference key="1">
    <citation type="journal article" date="2009" name="PLoS Genet.">
        <title>Organised genome dynamics in the Escherichia coli species results in highly diverse adaptive paths.</title>
        <authorList>
            <person name="Touchon M."/>
            <person name="Hoede C."/>
            <person name="Tenaillon O."/>
            <person name="Barbe V."/>
            <person name="Baeriswyl S."/>
            <person name="Bidet P."/>
            <person name="Bingen E."/>
            <person name="Bonacorsi S."/>
            <person name="Bouchier C."/>
            <person name="Bouvet O."/>
            <person name="Calteau A."/>
            <person name="Chiapello H."/>
            <person name="Clermont O."/>
            <person name="Cruveiller S."/>
            <person name="Danchin A."/>
            <person name="Diard M."/>
            <person name="Dossat C."/>
            <person name="Karoui M.E."/>
            <person name="Frapy E."/>
            <person name="Garry L."/>
            <person name="Ghigo J.M."/>
            <person name="Gilles A.M."/>
            <person name="Johnson J."/>
            <person name="Le Bouguenec C."/>
            <person name="Lescat M."/>
            <person name="Mangenot S."/>
            <person name="Martinez-Jehanne V."/>
            <person name="Matic I."/>
            <person name="Nassif X."/>
            <person name="Oztas S."/>
            <person name="Petit M.A."/>
            <person name="Pichon C."/>
            <person name="Rouy Z."/>
            <person name="Ruf C.S."/>
            <person name="Schneider D."/>
            <person name="Tourret J."/>
            <person name="Vacherie B."/>
            <person name="Vallenet D."/>
            <person name="Medigue C."/>
            <person name="Rocha E.P.C."/>
            <person name="Denamur E."/>
        </authorList>
    </citation>
    <scope>NUCLEOTIDE SEQUENCE [LARGE SCALE GENOMIC DNA]</scope>
    <source>
        <strain>IAI39 / ExPEC</strain>
    </source>
</reference>
<organism>
    <name type="scientific">Escherichia coli O7:K1 (strain IAI39 / ExPEC)</name>
    <dbReference type="NCBI Taxonomy" id="585057"/>
    <lineage>
        <taxon>Bacteria</taxon>
        <taxon>Pseudomonadati</taxon>
        <taxon>Pseudomonadota</taxon>
        <taxon>Gammaproteobacteria</taxon>
        <taxon>Enterobacterales</taxon>
        <taxon>Enterobacteriaceae</taxon>
        <taxon>Escherichia</taxon>
    </lineage>
</organism>
<keyword id="KW-0238">DNA-binding</keyword>
<keyword id="KW-0658">Purine biosynthesis</keyword>
<keyword id="KW-0678">Repressor</keyword>
<keyword id="KW-0804">Transcription</keyword>
<keyword id="KW-0805">Transcription regulation</keyword>
<name>PURR_ECO7I</name>
<protein>
    <recommendedName>
        <fullName evidence="1">HTH-type transcriptional repressor PurR</fullName>
    </recommendedName>
    <alternativeName>
        <fullName evidence="1">Pur regulon repressor</fullName>
    </alternativeName>
    <alternativeName>
        <fullName evidence="1">Purine nucleotide synthesis repressor</fullName>
    </alternativeName>
</protein>